<sequence length="498" mass="53955">MRTNPTTSRPGVSTIEEKSTGRIDQIIGPVLDVTFPPGKLPYIYNALVVKSRDTDGKQINVTCEVQQLLGNNRVRAVAMSATDGLMRGMEVIDTGAPLSVPVGGATLGRIFNVLGEPVDNLGPVDTSATFPIHRSAPAFIELDTKLSIFETGIKVVDLLAPYRRGGKIGLFGGAGVGKTVLIMELINNIAKAHGGVSVFGGVGERTREGNDLYMEMKESGVINEKNLEESKVALVYGQMNEPPGARMRVGLTALTMAEYFRDVNKQDVLLFIDNIFRFVQAGSEVSALLGRMPSAVGYQPTLSTEMGSLQERITSTKKGSITSIQAVYVPADDLTDPAPATTFAHLDATTVLSRGLASKGIYPAVDPLDSTSTMLQPRIVGNEHYETAQRVKQTLQRYKELQDIIAILGLDELSEEDRLTVARARKIERFLSQPFFVAEVFTGSPGKYVGLAETIRGFQLILSGELDGLPEQAFYLVGNIDEASTKAINLEEENKLKK</sequence>
<accession>Q6ENG7</accession>
<name>ATPB_ORYNI</name>
<proteinExistence type="inferred from homology"/>
<comment type="function">
    <text evidence="1">Produces ATP from ADP in the presence of a proton gradient across the membrane. The catalytic sites are hosted primarily by the beta subunits.</text>
</comment>
<comment type="catalytic activity">
    <reaction evidence="1">
        <text>ATP + H2O + 4 H(+)(in) = ADP + phosphate + 5 H(+)(out)</text>
        <dbReference type="Rhea" id="RHEA:57720"/>
        <dbReference type="ChEBI" id="CHEBI:15377"/>
        <dbReference type="ChEBI" id="CHEBI:15378"/>
        <dbReference type="ChEBI" id="CHEBI:30616"/>
        <dbReference type="ChEBI" id="CHEBI:43474"/>
        <dbReference type="ChEBI" id="CHEBI:456216"/>
        <dbReference type="EC" id="7.1.2.2"/>
    </reaction>
</comment>
<comment type="subunit">
    <text evidence="1">F-type ATPases have 2 components, CF(1) - the catalytic core - and CF(0) - the membrane proton channel. CF(1) has five subunits: alpha(3), beta(3), gamma(1), delta(1), epsilon(1). CF(0) has four main subunits: a(1), b(1), b'(1) and c(9-12).</text>
</comment>
<comment type="subcellular location">
    <subcellularLocation>
        <location evidence="1">Plastid</location>
        <location evidence="1">Chloroplast thylakoid membrane</location>
        <topology evidence="1">Peripheral membrane protein</topology>
    </subcellularLocation>
</comment>
<comment type="similarity">
    <text evidence="1">Belongs to the ATPase alpha/beta chains family.</text>
</comment>
<keyword id="KW-0066">ATP synthesis</keyword>
<keyword id="KW-0067">ATP-binding</keyword>
<keyword id="KW-0139">CF(1)</keyword>
<keyword id="KW-0150">Chloroplast</keyword>
<keyword id="KW-0375">Hydrogen ion transport</keyword>
<keyword id="KW-0406">Ion transport</keyword>
<keyword id="KW-0472">Membrane</keyword>
<keyword id="KW-0547">Nucleotide-binding</keyword>
<keyword id="KW-0934">Plastid</keyword>
<keyword id="KW-1185">Reference proteome</keyword>
<keyword id="KW-0793">Thylakoid</keyword>
<keyword id="KW-1278">Translocase</keyword>
<keyword id="KW-0813">Transport</keyword>
<reference key="1">
    <citation type="journal article" date="2004" name="Gene">
        <title>The complete nucleotide sequence of wild rice (Oryza nivara) chloroplast genome: first genome wide comparative sequence analysis of wild and cultivated rice.</title>
        <authorList>
            <person name="Masood M.S."/>
            <person name="Nishikawa T."/>
            <person name="Fukuoka S."/>
            <person name="Njenga P.K."/>
            <person name="Tsudzuki T."/>
            <person name="Kadowaki K."/>
        </authorList>
    </citation>
    <scope>NUCLEOTIDE SEQUENCE [LARGE SCALE GENOMIC DNA]</scope>
    <source>
        <strain evidence="2">cv. SL10</strain>
    </source>
</reference>
<gene>
    <name evidence="1" type="primary">atpB</name>
</gene>
<organism>
    <name type="scientific">Oryza nivara</name>
    <name type="common">Indian wild rice</name>
    <name type="synonym">Oryza sativa f. spontanea</name>
    <dbReference type="NCBI Taxonomy" id="4536"/>
    <lineage>
        <taxon>Eukaryota</taxon>
        <taxon>Viridiplantae</taxon>
        <taxon>Streptophyta</taxon>
        <taxon>Embryophyta</taxon>
        <taxon>Tracheophyta</taxon>
        <taxon>Spermatophyta</taxon>
        <taxon>Magnoliopsida</taxon>
        <taxon>Liliopsida</taxon>
        <taxon>Poales</taxon>
        <taxon>Poaceae</taxon>
        <taxon>BOP clade</taxon>
        <taxon>Oryzoideae</taxon>
        <taxon>Oryzeae</taxon>
        <taxon>Oryzinae</taxon>
        <taxon>Oryza</taxon>
    </lineage>
</organism>
<feature type="chain" id="PRO_0000144536" description="ATP synthase subunit beta, chloroplastic">
    <location>
        <begin position="1"/>
        <end position="498"/>
    </location>
</feature>
<feature type="binding site" evidence="1">
    <location>
        <begin position="172"/>
        <end position="179"/>
    </location>
    <ligand>
        <name>ATP</name>
        <dbReference type="ChEBI" id="CHEBI:30616"/>
    </ligand>
</feature>
<dbReference type="EC" id="7.1.2.2" evidence="1"/>
<dbReference type="EMBL" id="AP006728">
    <property type="protein sequence ID" value="BAD26785.1"/>
    <property type="molecule type" value="Genomic_DNA"/>
</dbReference>
<dbReference type="RefSeq" id="YP_052756.1">
    <property type="nucleotide sequence ID" value="NC_005973.1"/>
</dbReference>
<dbReference type="SMR" id="Q6ENG7"/>
<dbReference type="STRING" id="4536.Q6ENG7"/>
<dbReference type="GeneID" id="2885885"/>
<dbReference type="eggNOG" id="KOG1350">
    <property type="taxonomic scope" value="Eukaryota"/>
</dbReference>
<dbReference type="eggNOG" id="KOG1758">
    <property type="taxonomic scope" value="Eukaryota"/>
</dbReference>
<dbReference type="Proteomes" id="UP000006591">
    <property type="component" value="Chloroplast"/>
</dbReference>
<dbReference type="GO" id="GO:0009535">
    <property type="term" value="C:chloroplast thylakoid membrane"/>
    <property type="evidence" value="ECO:0007669"/>
    <property type="project" value="UniProtKB-SubCell"/>
</dbReference>
<dbReference type="GO" id="GO:0005739">
    <property type="term" value="C:mitochondrion"/>
    <property type="evidence" value="ECO:0007669"/>
    <property type="project" value="GOC"/>
</dbReference>
<dbReference type="GO" id="GO:0009536">
    <property type="term" value="C:plastid"/>
    <property type="evidence" value="ECO:0000305"/>
    <property type="project" value="Gramene"/>
</dbReference>
<dbReference type="GO" id="GO:0045259">
    <property type="term" value="C:proton-transporting ATP synthase complex"/>
    <property type="evidence" value="ECO:0007669"/>
    <property type="project" value="UniProtKB-KW"/>
</dbReference>
<dbReference type="GO" id="GO:0005524">
    <property type="term" value="F:ATP binding"/>
    <property type="evidence" value="ECO:0007669"/>
    <property type="project" value="UniProtKB-UniRule"/>
</dbReference>
<dbReference type="GO" id="GO:0016887">
    <property type="term" value="F:ATP hydrolysis activity"/>
    <property type="evidence" value="ECO:0007669"/>
    <property type="project" value="InterPro"/>
</dbReference>
<dbReference type="GO" id="GO:0046933">
    <property type="term" value="F:proton-transporting ATP synthase activity, rotational mechanism"/>
    <property type="evidence" value="ECO:0007669"/>
    <property type="project" value="UniProtKB-UniRule"/>
</dbReference>
<dbReference type="GO" id="GO:0042776">
    <property type="term" value="P:proton motive force-driven mitochondrial ATP synthesis"/>
    <property type="evidence" value="ECO:0007669"/>
    <property type="project" value="TreeGrafter"/>
</dbReference>
<dbReference type="CDD" id="cd18110">
    <property type="entry name" value="ATP-synt_F1_beta_C"/>
    <property type="match status" value="1"/>
</dbReference>
<dbReference type="CDD" id="cd18115">
    <property type="entry name" value="ATP-synt_F1_beta_N"/>
    <property type="match status" value="1"/>
</dbReference>
<dbReference type="CDD" id="cd01133">
    <property type="entry name" value="F1-ATPase_beta_CD"/>
    <property type="match status" value="1"/>
</dbReference>
<dbReference type="FunFam" id="1.10.1140.10:FF:000001">
    <property type="entry name" value="ATP synthase subunit beta"/>
    <property type="match status" value="1"/>
</dbReference>
<dbReference type="FunFam" id="3.40.50.12240:FF:000006">
    <property type="entry name" value="ATP synthase subunit beta"/>
    <property type="match status" value="1"/>
</dbReference>
<dbReference type="FunFam" id="3.40.50.300:FF:000026">
    <property type="entry name" value="ATP synthase subunit beta"/>
    <property type="match status" value="1"/>
</dbReference>
<dbReference type="FunFam" id="2.40.10.170:FF:000002">
    <property type="entry name" value="ATP synthase subunit beta, chloroplastic"/>
    <property type="match status" value="1"/>
</dbReference>
<dbReference type="Gene3D" id="2.40.10.170">
    <property type="match status" value="1"/>
</dbReference>
<dbReference type="Gene3D" id="1.10.1140.10">
    <property type="entry name" value="Bovine Mitochondrial F1-atpase, Atp Synthase Beta Chain, Chain D, domain 3"/>
    <property type="match status" value="1"/>
</dbReference>
<dbReference type="Gene3D" id="3.40.50.300">
    <property type="entry name" value="P-loop containing nucleotide triphosphate hydrolases"/>
    <property type="match status" value="1"/>
</dbReference>
<dbReference type="HAMAP" id="MF_01347">
    <property type="entry name" value="ATP_synth_beta_bact"/>
    <property type="match status" value="1"/>
</dbReference>
<dbReference type="InterPro" id="IPR003593">
    <property type="entry name" value="AAA+_ATPase"/>
</dbReference>
<dbReference type="InterPro" id="IPR055190">
    <property type="entry name" value="ATP-synt_VA_C"/>
</dbReference>
<dbReference type="InterPro" id="IPR005722">
    <property type="entry name" value="ATP_synth_F1_bsu"/>
</dbReference>
<dbReference type="InterPro" id="IPR020003">
    <property type="entry name" value="ATPase_a/bsu_AS"/>
</dbReference>
<dbReference type="InterPro" id="IPR050053">
    <property type="entry name" value="ATPase_alpha/beta_chains"/>
</dbReference>
<dbReference type="InterPro" id="IPR004100">
    <property type="entry name" value="ATPase_F1/V1/A1_a/bsu_N"/>
</dbReference>
<dbReference type="InterPro" id="IPR036121">
    <property type="entry name" value="ATPase_F1/V1/A1_a/bsu_N_sf"/>
</dbReference>
<dbReference type="InterPro" id="IPR000194">
    <property type="entry name" value="ATPase_F1/V1/A1_a/bsu_nucl-bd"/>
</dbReference>
<dbReference type="InterPro" id="IPR024034">
    <property type="entry name" value="ATPase_F1/V1_b/a_C"/>
</dbReference>
<dbReference type="InterPro" id="IPR027417">
    <property type="entry name" value="P-loop_NTPase"/>
</dbReference>
<dbReference type="NCBIfam" id="TIGR01039">
    <property type="entry name" value="atpD"/>
    <property type="match status" value="1"/>
</dbReference>
<dbReference type="PANTHER" id="PTHR15184">
    <property type="entry name" value="ATP SYNTHASE"/>
    <property type="match status" value="1"/>
</dbReference>
<dbReference type="PANTHER" id="PTHR15184:SF71">
    <property type="entry name" value="ATP SYNTHASE SUBUNIT BETA, MITOCHONDRIAL"/>
    <property type="match status" value="1"/>
</dbReference>
<dbReference type="Pfam" id="PF00006">
    <property type="entry name" value="ATP-synt_ab"/>
    <property type="match status" value="1"/>
</dbReference>
<dbReference type="Pfam" id="PF02874">
    <property type="entry name" value="ATP-synt_ab_N"/>
    <property type="match status" value="1"/>
</dbReference>
<dbReference type="Pfam" id="PF22919">
    <property type="entry name" value="ATP-synt_VA_C"/>
    <property type="match status" value="1"/>
</dbReference>
<dbReference type="SMART" id="SM00382">
    <property type="entry name" value="AAA"/>
    <property type="match status" value="1"/>
</dbReference>
<dbReference type="SUPFAM" id="SSF47917">
    <property type="entry name" value="C-terminal domain of alpha and beta subunits of F1 ATP synthase"/>
    <property type="match status" value="1"/>
</dbReference>
<dbReference type="SUPFAM" id="SSF50615">
    <property type="entry name" value="N-terminal domain of alpha and beta subunits of F1 ATP synthase"/>
    <property type="match status" value="1"/>
</dbReference>
<dbReference type="SUPFAM" id="SSF52540">
    <property type="entry name" value="P-loop containing nucleoside triphosphate hydrolases"/>
    <property type="match status" value="1"/>
</dbReference>
<dbReference type="PROSITE" id="PS00152">
    <property type="entry name" value="ATPASE_ALPHA_BETA"/>
    <property type="match status" value="1"/>
</dbReference>
<protein>
    <recommendedName>
        <fullName evidence="1">ATP synthase subunit beta, chloroplastic</fullName>
        <ecNumber evidence="1">7.1.2.2</ecNumber>
    </recommendedName>
    <alternativeName>
        <fullName evidence="1">ATP synthase F1 sector subunit beta</fullName>
    </alternativeName>
    <alternativeName>
        <fullName evidence="1">F-ATPase subunit beta</fullName>
    </alternativeName>
</protein>
<geneLocation type="chloroplast"/>
<evidence type="ECO:0000255" key="1">
    <source>
        <dbReference type="HAMAP-Rule" id="MF_01347"/>
    </source>
</evidence>
<evidence type="ECO:0000312" key="2">
    <source>
        <dbReference type="Proteomes" id="UP000006591"/>
    </source>
</evidence>